<protein>
    <recommendedName>
        <fullName evidence="1">Arginine--tRNA ligase</fullName>
        <ecNumber evidence="1">6.1.1.19</ecNumber>
    </recommendedName>
    <alternativeName>
        <fullName evidence="1">Arginyl-tRNA synthetase</fullName>
        <shortName evidence="1">ArgRS</shortName>
    </alternativeName>
</protein>
<reference key="1">
    <citation type="journal article" date="2001" name="Proc. Natl. Acad. Sci. U.S.A.">
        <title>Complete genome sequence of an M1 strain of Streptococcus pyogenes.</title>
        <authorList>
            <person name="Ferretti J.J."/>
            <person name="McShan W.M."/>
            <person name="Ajdic D.J."/>
            <person name="Savic D.J."/>
            <person name="Savic G."/>
            <person name="Lyon K."/>
            <person name="Primeaux C."/>
            <person name="Sezate S."/>
            <person name="Suvorov A.N."/>
            <person name="Kenton S."/>
            <person name="Lai H.S."/>
            <person name="Lin S.P."/>
            <person name="Qian Y."/>
            <person name="Jia H.G."/>
            <person name="Najar F.Z."/>
            <person name="Ren Q."/>
            <person name="Zhu H."/>
            <person name="Song L."/>
            <person name="White J."/>
            <person name="Yuan X."/>
            <person name="Clifton S.W."/>
            <person name="Roe B.A."/>
            <person name="McLaughlin R.E."/>
        </authorList>
    </citation>
    <scope>NUCLEOTIDE SEQUENCE [LARGE SCALE GENOMIC DNA]</scope>
    <source>
        <strain>ATCC 700294 / SF370 / Serotype M1</strain>
    </source>
</reference>
<reference key="2">
    <citation type="journal article" date="2005" name="J. Infect. Dis.">
        <title>Evolutionary origin and emergence of a highly successful clone of serotype M1 group A Streptococcus involved multiple horizontal gene transfer events.</title>
        <authorList>
            <person name="Sumby P."/>
            <person name="Porcella S.F."/>
            <person name="Madrigal A.G."/>
            <person name="Barbian K.D."/>
            <person name="Virtaneva K."/>
            <person name="Ricklefs S.M."/>
            <person name="Sturdevant D.E."/>
            <person name="Graham M.R."/>
            <person name="Vuopio-Varkila J."/>
            <person name="Hoe N.P."/>
            <person name="Musser J.M."/>
        </authorList>
    </citation>
    <scope>NUCLEOTIDE SEQUENCE [LARGE SCALE GENOMIC DNA]</scope>
    <source>
        <strain>ATCC BAA-947 / MGAS5005 / Serotype M1</strain>
    </source>
</reference>
<comment type="catalytic activity">
    <reaction evidence="1">
        <text>tRNA(Arg) + L-arginine + ATP = L-arginyl-tRNA(Arg) + AMP + diphosphate</text>
        <dbReference type="Rhea" id="RHEA:20301"/>
        <dbReference type="Rhea" id="RHEA-COMP:9658"/>
        <dbReference type="Rhea" id="RHEA-COMP:9673"/>
        <dbReference type="ChEBI" id="CHEBI:30616"/>
        <dbReference type="ChEBI" id="CHEBI:32682"/>
        <dbReference type="ChEBI" id="CHEBI:33019"/>
        <dbReference type="ChEBI" id="CHEBI:78442"/>
        <dbReference type="ChEBI" id="CHEBI:78513"/>
        <dbReference type="ChEBI" id="CHEBI:456215"/>
        <dbReference type="EC" id="6.1.1.19"/>
    </reaction>
</comment>
<comment type="subunit">
    <text evidence="1">Monomer.</text>
</comment>
<comment type="subcellular location">
    <subcellularLocation>
        <location evidence="1">Cytoplasm</location>
    </subcellularLocation>
</comment>
<comment type="similarity">
    <text evidence="1">Belongs to the class-I aminoacyl-tRNA synthetase family.</text>
</comment>
<comment type="sequence caution" evidence="2">
    <conflict type="erroneous initiation">
        <sequence resource="EMBL-CDS" id="AAZ52426"/>
    </conflict>
</comment>
<sequence length="563" mass="63121">MDTKTLIASEIAKVVPELEQDAIFNLLETPKNSDMGDLAFPAFSLAKVLRKAPQMIASELAEQIDESQFEKVVAVGPYINFFLDKAKISSQVLEQVITAGSDYAQQDEGQGRNVAIDMSSPNIAKPFSIGHLRSTVIGDSLAHIFAKMGYKPVKINHLGDWGKQFGMLIVAYKKWGDEAAVQAHPIDELLKLYVRINAEAETDPTVDEEAREWFRKLEDGDKEATELWQWFRDESLLEFNRLYDQLHVTFDSYNGEAFYNDKMDEVLDLLEAKNLLVESKGAQVVNLEKYGIEHPALIKKSDGATLYITRDLAAALYRKRTYDFAKSVYVVGNEQAAHFKQLKAVLKEMGYDWSDDMTHVAFGLVTKGGAKLSTRKGNVILLEPTVAEAINRAASQIEAKNPNLADKEAVAHAVGVGAIKFYDLKTDRMNGYDFDLEAMVSFEGETGPYVQYAHARIQSILRKADFTPSATTTYSLADAESWEIIKLIQDFPRIIKRTSDNFEPSIMAKFAINLAQSFNKYYAHTRILDDNSERDNRLALCYATATVLKEALRLLGVDAPNEM</sequence>
<dbReference type="EC" id="6.1.1.19" evidence="1"/>
<dbReference type="EMBL" id="AE004092">
    <property type="protein sequence ID" value="AAK34788.1"/>
    <property type="molecule type" value="Genomic_DNA"/>
</dbReference>
<dbReference type="EMBL" id="CP000017">
    <property type="protein sequence ID" value="AAZ52426.1"/>
    <property type="status" value="ALT_INIT"/>
    <property type="molecule type" value="Genomic_DNA"/>
</dbReference>
<dbReference type="RefSeq" id="NP_270067.1">
    <property type="nucleotide sequence ID" value="NC_002737.2"/>
</dbReference>
<dbReference type="SMR" id="Q99XL5"/>
<dbReference type="PaxDb" id="1314-HKU360_01921"/>
<dbReference type="KEGG" id="spy:SPy_2151"/>
<dbReference type="KEGG" id="spz:M5005_Spy1808"/>
<dbReference type="PATRIC" id="fig|160490.10.peg.1863"/>
<dbReference type="HOGENOM" id="CLU_006406_6_1_9"/>
<dbReference type="OMA" id="NKPLHLG"/>
<dbReference type="Proteomes" id="UP000000750">
    <property type="component" value="Chromosome"/>
</dbReference>
<dbReference type="GO" id="GO:0005737">
    <property type="term" value="C:cytoplasm"/>
    <property type="evidence" value="ECO:0007669"/>
    <property type="project" value="UniProtKB-SubCell"/>
</dbReference>
<dbReference type="GO" id="GO:0004814">
    <property type="term" value="F:arginine-tRNA ligase activity"/>
    <property type="evidence" value="ECO:0007669"/>
    <property type="project" value="UniProtKB-UniRule"/>
</dbReference>
<dbReference type="GO" id="GO:0005524">
    <property type="term" value="F:ATP binding"/>
    <property type="evidence" value="ECO:0007669"/>
    <property type="project" value="UniProtKB-UniRule"/>
</dbReference>
<dbReference type="GO" id="GO:0006420">
    <property type="term" value="P:arginyl-tRNA aminoacylation"/>
    <property type="evidence" value="ECO:0007669"/>
    <property type="project" value="UniProtKB-UniRule"/>
</dbReference>
<dbReference type="CDD" id="cd07956">
    <property type="entry name" value="Anticodon_Ia_Arg"/>
    <property type="match status" value="1"/>
</dbReference>
<dbReference type="CDD" id="cd00671">
    <property type="entry name" value="ArgRS_core"/>
    <property type="match status" value="1"/>
</dbReference>
<dbReference type="FunFam" id="3.40.50.620:FF:000116">
    <property type="entry name" value="Arginine--tRNA ligase"/>
    <property type="match status" value="1"/>
</dbReference>
<dbReference type="FunFam" id="1.10.730.10:FF:000006">
    <property type="entry name" value="Arginyl-tRNA synthetase 2, mitochondrial"/>
    <property type="match status" value="1"/>
</dbReference>
<dbReference type="Gene3D" id="3.30.1360.70">
    <property type="entry name" value="Arginyl tRNA synthetase N-terminal domain"/>
    <property type="match status" value="1"/>
</dbReference>
<dbReference type="Gene3D" id="3.40.50.620">
    <property type="entry name" value="HUPs"/>
    <property type="match status" value="1"/>
</dbReference>
<dbReference type="Gene3D" id="1.10.730.10">
    <property type="entry name" value="Isoleucyl-tRNA Synthetase, Domain 1"/>
    <property type="match status" value="1"/>
</dbReference>
<dbReference type="HAMAP" id="MF_00123">
    <property type="entry name" value="Arg_tRNA_synth"/>
    <property type="match status" value="1"/>
</dbReference>
<dbReference type="InterPro" id="IPR001278">
    <property type="entry name" value="Arg-tRNA-ligase"/>
</dbReference>
<dbReference type="InterPro" id="IPR005148">
    <property type="entry name" value="Arg-tRNA-synth_N"/>
</dbReference>
<dbReference type="InterPro" id="IPR036695">
    <property type="entry name" value="Arg-tRNA-synth_N_sf"/>
</dbReference>
<dbReference type="InterPro" id="IPR035684">
    <property type="entry name" value="ArgRS_core"/>
</dbReference>
<dbReference type="InterPro" id="IPR008909">
    <property type="entry name" value="DALR_anticod-bd"/>
</dbReference>
<dbReference type="InterPro" id="IPR014729">
    <property type="entry name" value="Rossmann-like_a/b/a_fold"/>
</dbReference>
<dbReference type="InterPro" id="IPR009080">
    <property type="entry name" value="tRNAsynth_Ia_anticodon-bd"/>
</dbReference>
<dbReference type="NCBIfam" id="TIGR00456">
    <property type="entry name" value="argS"/>
    <property type="match status" value="1"/>
</dbReference>
<dbReference type="PANTHER" id="PTHR11956:SF5">
    <property type="entry name" value="ARGININE--TRNA LIGASE, CYTOPLASMIC"/>
    <property type="match status" value="1"/>
</dbReference>
<dbReference type="PANTHER" id="PTHR11956">
    <property type="entry name" value="ARGINYL-TRNA SYNTHETASE"/>
    <property type="match status" value="1"/>
</dbReference>
<dbReference type="Pfam" id="PF03485">
    <property type="entry name" value="Arg_tRNA_synt_N"/>
    <property type="match status" value="1"/>
</dbReference>
<dbReference type="Pfam" id="PF05746">
    <property type="entry name" value="DALR_1"/>
    <property type="match status" value="1"/>
</dbReference>
<dbReference type="Pfam" id="PF00750">
    <property type="entry name" value="tRNA-synt_1d"/>
    <property type="match status" value="1"/>
</dbReference>
<dbReference type="PRINTS" id="PR01038">
    <property type="entry name" value="TRNASYNTHARG"/>
</dbReference>
<dbReference type="SMART" id="SM01016">
    <property type="entry name" value="Arg_tRNA_synt_N"/>
    <property type="match status" value="1"/>
</dbReference>
<dbReference type="SMART" id="SM00836">
    <property type="entry name" value="DALR_1"/>
    <property type="match status" value="1"/>
</dbReference>
<dbReference type="SUPFAM" id="SSF47323">
    <property type="entry name" value="Anticodon-binding domain of a subclass of class I aminoacyl-tRNA synthetases"/>
    <property type="match status" value="1"/>
</dbReference>
<dbReference type="SUPFAM" id="SSF55190">
    <property type="entry name" value="Arginyl-tRNA synthetase (ArgRS), N-terminal 'additional' domain"/>
    <property type="match status" value="1"/>
</dbReference>
<dbReference type="SUPFAM" id="SSF52374">
    <property type="entry name" value="Nucleotidylyl transferase"/>
    <property type="match status" value="1"/>
</dbReference>
<evidence type="ECO:0000255" key="1">
    <source>
        <dbReference type="HAMAP-Rule" id="MF_00123"/>
    </source>
</evidence>
<evidence type="ECO:0000305" key="2"/>
<feature type="chain" id="PRO_0000151620" description="Arginine--tRNA ligase">
    <location>
        <begin position="1"/>
        <end position="563"/>
    </location>
</feature>
<feature type="short sequence motif" description="'HIGH' region">
    <location>
        <begin position="121"/>
        <end position="131"/>
    </location>
</feature>
<keyword id="KW-0030">Aminoacyl-tRNA synthetase</keyword>
<keyword id="KW-0067">ATP-binding</keyword>
<keyword id="KW-0963">Cytoplasm</keyword>
<keyword id="KW-0436">Ligase</keyword>
<keyword id="KW-0547">Nucleotide-binding</keyword>
<keyword id="KW-0648">Protein biosynthesis</keyword>
<keyword id="KW-1185">Reference proteome</keyword>
<proteinExistence type="inferred from homology"/>
<organism>
    <name type="scientific">Streptococcus pyogenes serotype M1</name>
    <dbReference type="NCBI Taxonomy" id="301447"/>
    <lineage>
        <taxon>Bacteria</taxon>
        <taxon>Bacillati</taxon>
        <taxon>Bacillota</taxon>
        <taxon>Bacilli</taxon>
        <taxon>Lactobacillales</taxon>
        <taxon>Streptococcaceae</taxon>
        <taxon>Streptococcus</taxon>
    </lineage>
</organism>
<name>SYR_STRP1</name>
<gene>
    <name evidence="1" type="primary">argS</name>
    <name type="ordered locus">SPy_2151</name>
    <name type="ordered locus">M5005_Spy1808</name>
</gene>
<accession>Q99XL5</accession>
<accession>Q48W49</accession>